<reference key="1">
    <citation type="journal article" date="2001" name="Science">
        <title>Comparative genomics of Listeria species.</title>
        <authorList>
            <person name="Glaser P."/>
            <person name="Frangeul L."/>
            <person name="Buchrieser C."/>
            <person name="Rusniok C."/>
            <person name="Amend A."/>
            <person name="Baquero F."/>
            <person name="Berche P."/>
            <person name="Bloecker H."/>
            <person name="Brandt P."/>
            <person name="Chakraborty T."/>
            <person name="Charbit A."/>
            <person name="Chetouani F."/>
            <person name="Couve E."/>
            <person name="de Daruvar A."/>
            <person name="Dehoux P."/>
            <person name="Domann E."/>
            <person name="Dominguez-Bernal G."/>
            <person name="Duchaud E."/>
            <person name="Durant L."/>
            <person name="Dussurget O."/>
            <person name="Entian K.-D."/>
            <person name="Fsihi H."/>
            <person name="Garcia-del Portillo F."/>
            <person name="Garrido P."/>
            <person name="Gautier L."/>
            <person name="Goebel W."/>
            <person name="Gomez-Lopez N."/>
            <person name="Hain T."/>
            <person name="Hauf J."/>
            <person name="Jackson D."/>
            <person name="Jones L.-M."/>
            <person name="Kaerst U."/>
            <person name="Kreft J."/>
            <person name="Kuhn M."/>
            <person name="Kunst F."/>
            <person name="Kurapkat G."/>
            <person name="Madueno E."/>
            <person name="Maitournam A."/>
            <person name="Mata Vicente J."/>
            <person name="Ng E."/>
            <person name="Nedjari H."/>
            <person name="Nordsiek G."/>
            <person name="Novella S."/>
            <person name="de Pablos B."/>
            <person name="Perez-Diaz J.-C."/>
            <person name="Purcell R."/>
            <person name="Remmel B."/>
            <person name="Rose M."/>
            <person name="Schlueter T."/>
            <person name="Simoes N."/>
            <person name="Tierrez A."/>
            <person name="Vazquez-Boland J.-A."/>
            <person name="Voss H."/>
            <person name="Wehland J."/>
            <person name="Cossart P."/>
        </authorList>
    </citation>
    <scope>NUCLEOTIDE SEQUENCE [LARGE SCALE GENOMIC DNA]</scope>
    <source>
        <strain>ATCC BAA-680 / CLIP 11262</strain>
    </source>
</reference>
<comment type="function">
    <text evidence="1">Involved in transcription antitermination. Required for transcription of ribosomal RNA (rRNA) genes. Binds specifically to the boxA antiterminator sequence of the ribosomal RNA (rrn) operons.</text>
</comment>
<comment type="similarity">
    <text evidence="1">Belongs to the NusB family.</text>
</comment>
<organism>
    <name type="scientific">Listeria innocua serovar 6a (strain ATCC BAA-680 / CLIP 11262)</name>
    <dbReference type="NCBI Taxonomy" id="272626"/>
    <lineage>
        <taxon>Bacteria</taxon>
        <taxon>Bacillati</taxon>
        <taxon>Bacillota</taxon>
        <taxon>Bacilli</taxon>
        <taxon>Bacillales</taxon>
        <taxon>Listeriaceae</taxon>
        <taxon>Listeria</taxon>
    </lineage>
</organism>
<keyword id="KW-0694">RNA-binding</keyword>
<keyword id="KW-0804">Transcription</keyword>
<keyword id="KW-0889">Transcription antitermination</keyword>
<keyword id="KW-0805">Transcription regulation</keyword>
<name>NUSB_LISIN</name>
<protein>
    <recommendedName>
        <fullName evidence="1">Transcription antitermination protein NusB</fullName>
    </recommendedName>
    <alternativeName>
        <fullName evidence="1">Antitermination factor NusB</fullName>
    </alternativeName>
</protein>
<feature type="chain" id="PRO_0000176552" description="Transcription antitermination protein NusB">
    <location>
        <begin position="1"/>
        <end position="128"/>
    </location>
</feature>
<proteinExistence type="inferred from homology"/>
<gene>
    <name evidence="1" type="primary">nusB</name>
    <name type="ordered locus">lin1396</name>
</gene>
<sequence>MKRREAREKALQALFQIELNEMSLDQAIKNIMEDEQDDYMEQLVEGVMANKAEIDAIIEPNLDNWRIDRLNKVDLSLLRLSVYEIKYLDDVPNRVSLNESIEIAKIYSDEKSSKFINGVLANIAPEDK</sequence>
<evidence type="ECO:0000255" key="1">
    <source>
        <dbReference type="HAMAP-Rule" id="MF_00073"/>
    </source>
</evidence>
<accession>Q92BZ5</accession>
<dbReference type="EMBL" id="AL596168">
    <property type="protein sequence ID" value="CAC96627.1"/>
    <property type="molecule type" value="Genomic_DNA"/>
</dbReference>
<dbReference type="PIR" id="AC1607">
    <property type="entry name" value="AC1607"/>
</dbReference>
<dbReference type="RefSeq" id="WP_003762105.1">
    <property type="nucleotide sequence ID" value="NC_003212.1"/>
</dbReference>
<dbReference type="SMR" id="Q92BZ5"/>
<dbReference type="STRING" id="272626.gene:17565727"/>
<dbReference type="GeneID" id="93234776"/>
<dbReference type="KEGG" id="lin:lin1396"/>
<dbReference type="eggNOG" id="COG0781">
    <property type="taxonomic scope" value="Bacteria"/>
</dbReference>
<dbReference type="HOGENOM" id="CLU_087843_3_1_9"/>
<dbReference type="OrthoDB" id="9811381at2"/>
<dbReference type="Proteomes" id="UP000002513">
    <property type="component" value="Chromosome"/>
</dbReference>
<dbReference type="GO" id="GO:0005829">
    <property type="term" value="C:cytosol"/>
    <property type="evidence" value="ECO:0007669"/>
    <property type="project" value="TreeGrafter"/>
</dbReference>
<dbReference type="GO" id="GO:0003723">
    <property type="term" value="F:RNA binding"/>
    <property type="evidence" value="ECO:0007669"/>
    <property type="project" value="UniProtKB-UniRule"/>
</dbReference>
<dbReference type="GO" id="GO:0006353">
    <property type="term" value="P:DNA-templated transcription termination"/>
    <property type="evidence" value="ECO:0007669"/>
    <property type="project" value="UniProtKB-UniRule"/>
</dbReference>
<dbReference type="GO" id="GO:0031564">
    <property type="term" value="P:transcription antitermination"/>
    <property type="evidence" value="ECO:0007669"/>
    <property type="project" value="UniProtKB-KW"/>
</dbReference>
<dbReference type="CDD" id="cd00619">
    <property type="entry name" value="Terminator_NusB"/>
    <property type="match status" value="1"/>
</dbReference>
<dbReference type="FunFam" id="1.10.940.10:FF:000003">
    <property type="entry name" value="Transcription antitermination factor NusB"/>
    <property type="match status" value="1"/>
</dbReference>
<dbReference type="Gene3D" id="1.10.940.10">
    <property type="entry name" value="NusB-like"/>
    <property type="match status" value="1"/>
</dbReference>
<dbReference type="HAMAP" id="MF_00073">
    <property type="entry name" value="NusB"/>
    <property type="match status" value="1"/>
</dbReference>
<dbReference type="InterPro" id="IPR035926">
    <property type="entry name" value="NusB-like_sf"/>
</dbReference>
<dbReference type="InterPro" id="IPR011605">
    <property type="entry name" value="NusB_fam"/>
</dbReference>
<dbReference type="InterPro" id="IPR006027">
    <property type="entry name" value="NusB_RsmB_TIM44"/>
</dbReference>
<dbReference type="NCBIfam" id="TIGR01951">
    <property type="entry name" value="nusB"/>
    <property type="match status" value="1"/>
</dbReference>
<dbReference type="NCBIfam" id="NF001223">
    <property type="entry name" value="PRK00202.1-1"/>
    <property type="match status" value="1"/>
</dbReference>
<dbReference type="PANTHER" id="PTHR11078:SF3">
    <property type="entry name" value="ANTITERMINATION NUSB DOMAIN-CONTAINING PROTEIN"/>
    <property type="match status" value="1"/>
</dbReference>
<dbReference type="PANTHER" id="PTHR11078">
    <property type="entry name" value="N UTILIZATION SUBSTANCE PROTEIN B-RELATED"/>
    <property type="match status" value="1"/>
</dbReference>
<dbReference type="Pfam" id="PF01029">
    <property type="entry name" value="NusB"/>
    <property type="match status" value="1"/>
</dbReference>
<dbReference type="SUPFAM" id="SSF48013">
    <property type="entry name" value="NusB-like"/>
    <property type="match status" value="1"/>
</dbReference>